<sequence length="486" mass="52304">MASIRELHEQLVKKERSAVEITQETLDHIQELEPKLHSFLHITAQQALEQARAVDAKIAAGEEIGLLAGIPIGVKDNMCTKGIPTTCASRILENFVPPYESTVTQKLLDAGAVVVGKTNLDEFAMGSSTENSAYQVTANPWDLSRVPGGSSGGSAAAVAAEECVVALGSDTGGSIRQPASFCGVVGLKPTYGLVSRYGLVAYASSLDQIGPFGKSVEDTAILLKAIAGYDPKDSTSLKVEIPDYVASLKPDLKARGKLRIGVIKETFGEGLDSVVEQAVTKAIEQLQRLGAEIHVISCPNFRYGVPSYYIIAPSEASANLARYDGVKYGWRAPEGDNLLSMYKRTRATGFGAEVKRRIMIGTYALSAGYYDAYYLKAQKVRTLIKQDFENAFKNVDVLVSPTAPTTAFKAGEKTADPISMYLNDLMTIPVNLAGLPGLSLPCGFDEQGLPIGLQLIGKVLREDQLLQVAYAYEQSTSWHLSQPKIS</sequence>
<comment type="function">
    <text evidence="1">Allows the formation of correctly charged Gln-tRNA(Gln) through the transamidation of misacylated Glu-tRNA(Gln) in organisms which lack glutaminyl-tRNA synthetase. The reaction takes place in the presence of glutamine and ATP through an activated gamma-phospho-Glu-tRNA(Gln).</text>
</comment>
<comment type="catalytic activity">
    <reaction evidence="1">
        <text>L-glutamyl-tRNA(Gln) + L-glutamine + ATP + H2O = L-glutaminyl-tRNA(Gln) + L-glutamate + ADP + phosphate + H(+)</text>
        <dbReference type="Rhea" id="RHEA:17521"/>
        <dbReference type="Rhea" id="RHEA-COMP:9681"/>
        <dbReference type="Rhea" id="RHEA-COMP:9684"/>
        <dbReference type="ChEBI" id="CHEBI:15377"/>
        <dbReference type="ChEBI" id="CHEBI:15378"/>
        <dbReference type="ChEBI" id="CHEBI:29985"/>
        <dbReference type="ChEBI" id="CHEBI:30616"/>
        <dbReference type="ChEBI" id="CHEBI:43474"/>
        <dbReference type="ChEBI" id="CHEBI:58359"/>
        <dbReference type="ChEBI" id="CHEBI:78520"/>
        <dbReference type="ChEBI" id="CHEBI:78521"/>
        <dbReference type="ChEBI" id="CHEBI:456216"/>
        <dbReference type="EC" id="6.3.5.7"/>
    </reaction>
</comment>
<comment type="subunit">
    <text evidence="1">Heterotrimer of A, B and C subunits.</text>
</comment>
<comment type="similarity">
    <text evidence="1">Belongs to the amidase family. GatA subfamily.</text>
</comment>
<feature type="chain" id="PRO_0000241066" description="Glutamyl-tRNA(Gln) amidotransferase subunit A">
    <location>
        <begin position="1"/>
        <end position="486"/>
    </location>
</feature>
<feature type="active site" description="Charge relay system" evidence="1">
    <location>
        <position position="75"/>
    </location>
</feature>
<feature type="active site" description="Charge relay system" evidence="1">
    <location>
        <position position="150"/>
    </location>
</feature>
<feature type="active site" description="Acyl-ester intermediate" evidence="1">
    <location>
        <position position="174"/>
    </location>
</feature>
<reference key="1">
    <citation type="journal article" date="2014" name="Stand. Genomic Sci.">
        <title>Complete genome sequence of Anabaena variabilis ATCC 29413.</title>
        <authorList>
            <person name="Thiel T."/>
            <person name="Pratte B.S."/>
            <person name="Zhong J."/>
            <person name="Goodwin L."/>
            <person name="Copeland A."/>
            <person name="Lucas S."/>
            <person name="Han C."/>
            <person name="Pitluck S."/>
            <person name="Land M.L."/>
            <person name="Kyrpides N.C."/>
            <person name="Woyke T."/>
        </authorList>
    </citation>
    <scope>NUCLEOTIDE SEQUENCE [LARGE SCALE GENOMIC DNA]</scope>
    <source>
        <strain>ATCC 29413 / PCC 7937</strain>
    </source>
</reference>
<name>GATA_TRIV2</name>
<organism>
    <name type="scientific">Trichormus variabilis (strain ATCC 29413 / PCC 7937)</name>
    <name type="common">Anabaena variabilis</name>
    <dbReference type="NCBI Taxonomy" id="240292"/>
    <lineage>
        <taxon>Bacteria</taxon>
        <taxon>Bacillati</taxon>
        <taxon>Cyanobacteriota</taxon>
        <taxon>Cyanophyceae</taxon>
        <taxon>Nostocales</taxon>
        <taxon>Nostocaceae</taxon>
        <taxon>Trichormus</taxon>
    </lineage>
</organism>
<proteinExistence type="inferred from homology"/>
<dbReference type="EC" id="6.3.5.7" evidence="1"/>
<dbReference type="EMBL" id="CP000117">
    <property type="protein sequence ID" value="ABA23352.1"/>
    <property type="molecule type" value="Genomic_DNA"/>
</dbReference>
<dbReference type="SMR" id="Q3M6N4"/>
<dbReference type="STRING" id="240292.Ava_3747"/>
<dbReference type="KEGG" id="ava:Ava_3747"/>
<dbReference type="eggNOG" id="COG0154">
    <property type="taxonomic scope" value="Bacteria"/>
</dbReference>
<dbReference type="HOGENOM" id="CLU_009600_0_3_3"/>
<dbReference type="Proteomes" id="UP000002533">
    <property type="component" value="Chromosome"/>
</dbReference>
<dbReference type="GO" id="GO:0030956">
    <property type="term" value="C:glutamyl-tRNA(Gln) amidotransferase complex"/>
    <property type="evidence" value="ECO:0007669"/>
    <property type="project" value="InterPro"/>
</dbReference>
<dbReference type="GO" id="GO:0005524">
    <property type="term" value="F:ATP binding"/>
    <property type="evidence" value="ECO:0007669"/>
    <property type="project" value="UniProtKB-KW"/>
</dbReference>
<dbReference type="GO" id="GO:0050567">
    <property type="term" value="F:glutaminyl-tRNA synthase (glutamine-hydrolyzing) activity"/>
    <property type="evidence" value="ECO:0007669"/>
    <property type="project" value="UniProtKB-UniRule"/>
</dbReference>
<dbReference type="GO" id="GO:0006412">
    <property type="term" value="P:translation"/>
    <property type="evidence" value="ECO:0007669"/>
    <property type="project" value="UniProtKB-UniRule"/>
</dbReference>
<dbReference type="Gene3D" id="3.90.1300.10">
    <property type="entry name" value="Amidase signature (AS) domain"/>
    <property type="match status" value="1"/>
</dbReference>
<dbReference type="HAMAP" id="MF_00120">
    <property type="entry name" value="GatA"/>
    <property type="match status" value="1"/>
</dbReference>
<dbReference type="InterPro" id="IPR000120">
    <property type="entry name" value="Amidase"/>
</dbReference>
<dbReference type="InterPro" id="IPR020556">
    <property type="entry name" value="Amidase_CS"/>
</dbReference>
<dbReference type="InterPro" id="IPR023631">
    <property type="entry name" value="Amidase_dom"/>
</dbReference>
<dbReference type="InterPro" id="IPR036928">
    <property type="entry name" value="AS_sf"/>
</dbReference>
<dbReference type="InterPro" id="IPR004412">
    <property type="entry name" value="GatA"/>
</dbReference>
<dbReference type="NCBIfam" id="TIGR00132">
    <property type="entry name" value="gatA"/>
    <property type="match status" value="1"/>
</dbReference>
<dbReference type="PANTHER" id="PTHR11895:SF151">
    <property type="entry name" value="GLUTAMYL-TRNA(GLN) AMIDOTRANSFERASE SUBUNIT A"/>
    <property type="match status" value="1"/>
</dbReference>
<dbReference type="PANTHER" id="PTHR11895">
    <property type="entry name" value="TRANSAMIDASE"/>
    <property type="match status" value="1"/>
</dbReference>
<dbReference type="Pfam" id="PF01425">
    <property type="entry name" value="Amidase"/>
    <property type="match status" value="1"/>
</dbReference>
<dbReference type="SUPFAM" id="SSF75304">
    <property type="entry name" value="Amidase signature (AS) enzymes"/>
    <property type="match status" value="1"/>
</dbReference>
<dbReference type="PROSITE" id="PS00571">
    <property type="entry name" value="AMIDASES"/>
    <property type="match status" value="1"/>
</dbReference>
<protein>
    <recommendedName>
        <fullName evidence="1">Glutamyl-tRNA(Gln) amidotransferase subunit A</fullName>
        <shortName evidence="1">Glu-ADT subunit A</shortName>
        <ecNumber evidence="1">6.3.5.7</ecNumber>
    </recommendedName>
</protein>
<evidence type="ECO:0000255" key="1">
    <source>
        <dbReference type="HAMAP-Rule" id="MF_00120"/>
    </source>
</evidence>
<keyword id="KW-0067">ATP-binding</keyword>
<keyword id="KW-0436">Ligase</keyword>
<keyword id="KW-0547">Nucleotide-binding</keyword>
<keyword id="KW-0648">Protein biosynthesis</keyword>
<gene>
    <name evidence="1" type="primary">gatA</name>
    <name type="ordered locus">Ava_3747</name>
</gene>
<accession>Q3M6N4</accession>